<keyword id="KW-0053">Apoptosis</keyword>
<keyword id="KW-0068">Autocatalytic cleavage</keyword>
<keyword id="KW-0106">Calcium</keyword>
<keyword id="KW-0153">Cholesterol metabolism</keyword>
<keyword id="KW-0963">Cytoplasm</keyword>
<keyword id="KW-1015">Disulfide bond</keyword>
<keyword id="KW-0256">Endoplasmic reticulum</keyword>
<keyword id="KW-0967">Endosome</keyword>
<keyword id="KW-0325">Glycoprotein</keyword>
<keyword id="KW-0333">Golgi apparatus</keyword>
<keyword id="KW-0378">Hydrolase</keyword>
<keyword id="KW-0443">Lipid metabolism</keyword>
<keyword id="KW-0458">Lysosome</keyword>
<keyword id="KW-0597">Phosphoprotein</keyword>
<keyword id="KW-0645">Protease</keyword>
<keyword id="KW-1185">Reference proteome</keyword>
<keyword id="KW-0964">Secreted</keyword>
<keyword id="KW-0720">Serine protease</keyword>
<keyword id="KW-0732">Signal</keyword>
<keyword id="KW-0753">Steroid metabolism</keyword>
<keyword id="KW-1207">Sterol metabolism</keyword>
<keyword id="KW-0765">Sulfation</keyword>
<keyword id="KW-0865">Zymogen</keyword>
<name>PCSK9_PANTR</name>
<sequence>MGTVSSRRSWWPLPLLLLLLLLLGPAGARAQEDEDGDYEELVLALRSEEDGLAEAPEHGTTATFHRCAKDPWRLPGTYVVVLKEETHLSQSERTARRLQAQAARRGYLTKILHVFHGLLPGFLVKMSGDLLELALKLPHVDYIEEDSSVFAQSIPWNLERITPPRYRADEYQPPDGGSLVEVYLLDTSIQSDHREIEGRVMVTDFENVPEEDGTRFHRQASKCDSHGTHLAGVVSGRDAGVAKGASMRSLRVLNCQGKGTVSGTLIGLEFIRKSQLVQPVGPLVVLLPLAGGYSRVLNAACQRLARAGVVLVTAAGNFRDDACLYSPASAPEVITVGATNAQDQPVTLGTLGTNFGRCVDLFAPGEDIIGASSDCSTCFVSQSGTSQAAAHVAGIAAMMLSAEPELTLAELRQRLIHFSAKDVINEAWFPEDQRVLTPNLVAALPPSTHGAGWQLFCRTVWSAHSGPTRMATAVARCAPDEELLSCSSFSRSGKRRGERMEAQGGKLVCRAHNAFGGEGVYAIARCCLLPQANCSIHTAPPAEAGMGTRVHCHQQGHVLTGCSSHWEVEDLGTHKPPMLRPRGQPNQCVGHREASIHASCCRAPGLECKVKEHGIPAPQEQVTVACEEGWTLTGCSALPGTSHVLGAYAVDNTCVVRSRDVSTAGSTSEEAVAAVAICCRSRHLAQASQELQ</sequence>
<evidence type="ECO:0000250" key="1"/>
<evidence type="ECO:0000250" key="2">
    <source>
        <dbReference type="UniProtKB" id="Q8NBP7"/>
    </source>
</evidence>
<evidence type="ECO:0000255" key="3"/>
<evidence type="ECO:0000255" key="4">
    <source>
        <dbReference type="PROSITE-ProRule" id="PRU01240"/>
    </source>
</evidence>
<evidence type="ECO:0000305" key="5"/>
<proteinExistence type="evidence at transcript level"/>
<protein>
    <recommendedName>
        <fullName>Proprotein convertase subtilisin/kexin type 9</fullName>
        <ecNumber>3.4.21.-</ecNumber>
    </recommendedName>
    <alternativeName>
        <fullName>Proprotein convertase 9</fullName>
        <shortName>PC9</shortName>
    </alternativeName>
    <alternativeName>
        <fullName>Subtilisin/kexin-like protease PC9</fullName>
    </alternativeName>
</protein>
<organism>
    <name type="scientific">Pan troglodytes</name>
    <name type="common">Chimpanzee</name>
    <dbReference type="NCBI Taxonomy" id="9598"/>
    <lineage>
        <taxon>Eukaryota</taxon>
        <taxon>Metazoa</taxon>
        <taxon>Chordata</taxon>
        <taxon>Craniata</taxon>
        <taxon>Vertebrata</taxon>
        <taxon>Euteleostomi</taxon>
        <taxon>Mammalia</taxon>
        <taxon>Eutheria</taxon>
        <taxon>Euarchontoglires</taxon>
        <taxon>Primates</taxon>
        <taxon>Haplorrhini</taxon>
        <taxon>Catarrhini</taxon>
        <taxon>Hominidae</taxon>
        <taxon>Pan</taxon>
    </lineage>
</organism>
<dbReference type="EC" id="3.4.21.-"/>
<dbReference type="EMBL" id="EF692497">
    <property type="protein sequence ID" value="ABV59217.1"/>
    <property type="molecule type" value="mRNA"/>
</dbReference>
<dbReference type="RefSeq" id="NP_001104592.1">
    <property type="nucleotide sequence ID" value="NM_001111122.1"/>
</dbReference>
<dbReference type="SMR" id="A8T644"/>
<dbReference type="FunCoup" id="A8T644">
    <property type="interactions" value="58"/>
</dbReference>
<dbReference type="STRING" id="9598.ENSPTRP00000001355"/>
<dbReference type="MEROPS" id="S08.039"/>
<dbReference type="GlyCosmos" id="A8T644">
    <property type="glycosylation" value="1 site, No reported glycans"/>
</dbReference>
<dbReference type="PaxDb" id="9598-ENSPTRP00000001355"/>
<dbReference type="GeneID" id="456880"/>
<dbReference type="KEGG" id="ptr:456880"/>
<dbReference type="CTD" id="255738"/>
<dbReference type="eggNOG" id="KOG1153">
    <property type="taxonomic scope" value="Eukaryota"/>
</dbReference>
<dbReference type="HOGENOM" id="CLU_011263_11_0_1"/>
<dbReference type="InParanoid" id="A8T644"/>
<dbReference type="TreeFam" id="TF106271"/>
<dbReference type="Proteomes" id="UP000002277">
    <property type="component" value="Unplaced"/>
</dbReference>
<dbReference type="GO" id="GO:0009986">
    <property type="term" value="C:cell surface"/>
    <property type="evidence" value="ECO:0000250"/>
    <property type="project" value="UniProtKB"/>
</dbReference>
<dbReference type="GO" id="GO:0005737">
    <property type="term" value="C:cytoplasm"/>
    <property type="evidence" value="ECO:0000250"/>
    <property type="project" value="UniProtKB"/>
</dbReference>
<dbReference type="GO" id="GO:0005769">
    <property type="term" value="C:early endosome"/>
    <property type="evidence" value="ECO:0000250"/>
    <property type="project" value="UniProtKB"/>
</dbReference>
<dbReference type="GO" id="GO:0005783">
    <property type="term" value="C:endoplasmic reticulum"/>
    <property type="evidence" value="ECO:0000250"/>
    <property type="project" value="UniProtKB"/>
</dbReference>
<dbReference type="GO" id="GO:0005615">
    <property type="term" value="C:extracellular space"/>
    <property type="evidence" value="ECO:0000318"/>
    <property type="project" value="GO_Central"/>
</dbReference>
<dbReference type="GO" id="GO:0005794">
    <property type="term" value="C:Golgi apparatus"/>
    <property type="evidence" value="ECO:0000250"/>
    <property type="project" value="UniProtKB"/>
</dbReference>
<dbReference type="GO" id="GO:0005770">
    <property type="term" value="C:late endosome"/>
    <property type="evidence" value="ECO:0000250"/>
    <property type="project" value="UniProtKB"/>
</dbReference>
<dbReference type="GO" id="GO:0005764">
    <property type="term" value="C:lysosome"/>
    <property type="evidence" value="ECO:0000250"/>
    <property type="project" value="UniProtKB"/>
</dbReference>
<dbReference type="GO" id="GO:0034185">
    <property type="term" value="F:apolipoprotein binding"/>
    <property type="evidence" value="ECO:0000250"/>
    <property type="project" value="UniProtKB"/>
</dbReference>
<dbReference type="GO" id="GO:0030169">
    <property type="term" value="F:low-density lipoprotein particle binding"/>
    <property type="evidence" value="ECO:0000250"/>
    <property type="project" value="UniProtKB"/>
</dbReference>
<dbReference type="GO" id="GO:0004252">
    <property type="term" value="F:serine-type endopeptidase activity"/>
    <property type="evidence" value="ECO:0000318"/>
    <property type="project" value="GO_Central"/>
</dbReference>
<dbReference type="GO" id="GO:0034189">
    <property type="term" value="F:very-low-density lipoprotein particle binding"/>
    <property type="evidence" value="ECO:0000250"/>
    <property type="project" value="UniProtKB"/>
</dbReference>
<dbReference type="GO" id="GO:0006915">
    <property type="term" value="P:apoptotic process"/>
    <property type="evidence" value="ECO:0007669"/>
    <property type="project" value="UniProtKB-KW"/>
</dbReference>
<dbReference type="GO" id="GO:0008203">
    <property type="term" value="P:cholesterol metabolic process"/>
    <property type="evidence" value="ECO:0007669"/>
    <property type="project" value="UniProtKB-KW"/>
</dbReference>
<dbReference type="GO" id="GO:0032802">
    <property type="term" value="P:low-density lipoprotein particle receptor catabolic process"/>
    <property type="evidence" value="ECO:0000250"/>
    <property type="project" value="UniProtKB"/>
</dbReference>
<dbReference type="GO" id="GO:0006508">
    <property type="term" value="P:proteolysis"/>
    <property type="evidence" value="ECO:0007669"/>
    <property type="project" value="UniProtKB-KW"/>
</dbReference>
<dbReference type="GO" id="GO:0043523">
    <property type="term" value="P:regulation of neuron apoptotic process"/>
    <property type="evidence" value="ECO:0000250"/>
    <property type="project" value="UniProtKB"/>
</dbReference>
<dbReference type="CDD" id="cd16839">
    <property type="entry name" value="PCSK9_C-CRD"/>
    <property type="match status" value="1"/>
</dbReference>
<dbReference type="CDD" id="cd04077">
    <property type="entry name" value="Peptidases_S8_PCSK9_ProteinaseK_like"/>
    <property type="match status" value="1"/>
</dbReference>
<dbReference type="FunFam" id="2.60.120.690:FF:000001">
    <property type="entry name" value="Proprotein convertase subtilisin/kexin type 9"/>
    <property type="match status" value="1"/>
</dbReference>
<dbReference type="FunFam" id="3.30.70.80:FF:000004">
    <property type="entry name" value="Proprotein convertase subtilisin/kexin type 9"/>
    <property type="match status" value="1"/>
</dbReference>
<dbReference type="FunFam" id="3.40.50.200:FF:000016">
    <property type="entry name" value="Proprotein convertase subtilisin/kexin type 9"/>
    <property type="match status" value="1"/>
</dbReference>
<dbReference type="Gene3D" id="3.30.70.80">
    <property type="entry name" value="Peptidase S8 propeptide/proteinase inhibitor I9"/>
    <property type="match status" value="1"/>
</dbReference>
<dbReference type="Gene3D" id="3.40.50.200">
    <property type="entry name" value="Peptidase S8/S53 domain"/>
    <property type="match status" value="1"/>
</dbReference>
<dbReference type="Gene3D" id="2.60.120.690">
    <property type="entry name" value="Proprotein convertase subtilisin/kexin type 9"/>
    <property type="match status" value="1"/>
</dbReference>
<dbReference type="InterPro" id="IPR041254">
    <property type="entry name" value="PCSK9_C1"/>
</dbReference>
<dbReference type="InterPro" id="IPR041052">
    <property type="entry name" value="PCSK9_C2"/>
</dbReference>
<dbReference type="InterPro" id="IPR041051">
    <property type="entry name" value="PCSK9_C3"/>
</dbReference>
<dbReference type="InterPro" id="IPR034193">
    <property type="entry name" value="PCSK9_ProteinaseK-like"/>
</dbReference>
<dbReference type="InterPro" id="IPR000209">
    <property type="entry name" value="Peptidase_S8/S53_dom"/>
</dbReference>
<dbReference type="InterPro" id="IPR036852">
    <property type="entry name" value="Peptidase_S8/S53_dom_sf"/>
</dbReference>
<dbReference type="InterPro" id="IPR050131">
    <property type="entry name" value="Peptidase_S8_subtilisin-like"/>
</dbReference>
<dbReference type="InterPro" id="IPR015500">
    <property type="entry name" value="Peptidase_S8_subtilisin-rel"/>
</dbReference>
<dbReference type="InterPro" id="IPR010259">
    <property type="entry name" value="S8pro/Inhibitor_I9"/>
</dbReference>
<dbReference type="InterPro" id="IPR037045">
    <property type="entry name" value="S8pro/Inhibitor_I9_sf"/>
</dbReference>
<dbReference type="PANTHER" id="PTHR43806">
    <property type="entry name" value="PEPTIDASE S8"/>
    <property type="match status" value="1"/>
</dbReference>
<dbReference type="PANTHER" id="PTHR43806:SF60">
    <property type="entry name" value="PROPROTEIN CONVERTASE SUBTILISIN_KEXIN TYPE 9"/>
    <property type="match status" value="1"/>
</dbReference>
<dbReference type="Pfam" id="PF05922">
    <property type="entry name" value="Inhibitor_I9"/>
    <property type="match status" value="1"/>
</dbReference>
<dbReference type="Pfam" id="PF18459">
    <property type="entry name" value="PCSK9_C1"/>
    <property type="match status" value="1"/>
</dbReference>
<dbReference type="Pfam" id="PF18464">
    <property type="entry name" value="PCSK9_C2"/>
    <property type="match status" value="1"/>
</dbReference>
<dbReference type="Pfam" id="PF18463">
    <property type="entry name" value="PCSK9_C3"/>
    <property type="match status" value="1"/>
</dbReference>
<dbReference type="Pfam" id="PF00082">
    <property type="entry name" value="Peptidase_S8"/>
    <property type="match status" value="1"/>
</dbReference>
<dbReference type="PRINTS" id="PR00723">
    <property type="entry name" value="SUBTILISIN"/>
</dbReference>
<dbReference type="SUPFAM" id="SSF54897">
    <property type="entry name" value="Protease propeptides/inhibitors"/>
    <property type="match status" value="1"/>
</dbReference>
<dbReference type="SUPFAM" id="SSF52743">
    <property type="entry name" value="Subtilisin-like"/>
    <property type="match status" value="1"/>
</dbReference>
<dbReference type="PROSITE" id="PS51892">
    <property type="entry name" value="SUBTILASE"/>
    <property type="match status" value="1"/>
</dbReference>
<gene>
    <name type="primary">PCSK9</name>
</gene>
<reference key="1">
    <citation type="journal article" date="2007" name="PLoS ONE">
        <title>Evidence for positive selection in the C-terminal domain of the cholesterol metabolism gene PCSK9 based on phylogenetic analysis in 14 primate species.</title>
        <authorList>
            <person name="Ding K."/>
            <person name="McDonough S.J."/>
            <person name="Kullo I.J."/>
        </authorList>
    </citation>
    <scope>NUCLEOTIDE SEQUENCE [MRNA]</scope>
</reference>
<comment type="function">
    <text evidence="1">Crucial player in the regulation of plasma cholesterol homeostasis. Binds to low-density lipid receptor family members: low density lipoprotein receptor (LDLR), very low density lipoprotein receptor (VLDLR), apolipoprotein E receptor (LRP1/APOER) and apolipoprotein receptor 2 (LRP8/APOER2), and promotes their degradation in intracellular acidic compartments. Acts via a non-proteolytic mechanism to enhance the degradation of the hepatic LDLR through a clathrin LDLRAP1/ARH-mediated pathway. May prevent the recycling of LDLR from endosomes to the cell surface or direct it to lysosomes for degradation. Can induce ubiquitination of LDLR leading to its subsequent degradation. Inhibits intracellular degradation of APOB via the autophagosome/lysosome pathway in a LDLR-independent manner. Involved in the disposal of non-acetylated intermediates of BACE1 in the early secretory pathway. Inhibits epithelial Na(+) channel (ENaC)-mediated Na(+) absorption by reducing ENaC surface expression primarily by increasing its proteasomal degradation. Regulates neuronal apoptosis via modulation of LRP8/APOER2 levels and related anti-apoptotic signaling pathways (By similarity).</text>
</comment>
<comment type="cofactor">
    <cofactor evidence="1">
        <name>Ca(2+)</name>
        <dbReference type="ChEBI" id="CHEBI:29108"/>
    </cofactor>
</comment>
<comment type="activity regulation">
    <text evidence="1">Its proteolytic activity is autoinhibited by the non-covalent binding of the propeptide to the catalytic domain. Inhibited by EGTA (By similarity).</text>
</comment>
<comment type="subunit">
    <text evidence="2">Monomer. Can self-associate to form dimers and higher multimers which may have increased LDLR degrading activity. The precursor protein but not the mature protein may form multimers. Interacts with APOB, VLDLR, LRP8/APOER2 and BACE1. The full-length immature form (pro-PCSK9) interacts with SCNN1A, SCNN1B and SCNN1G. The pro-PCSK9 form (via C-terminal domain) interacts with LDLR. Interacts (via the C-terminal domain) with ANXA2 (via repeat Annexin 1); the interaction inhibits the degradation of LDLR.</text>
</comment>
<comment type="subcellular location">
    <subcellularLocation>
        <location evidence="1">Cytoplasm</location>
    </subcellularLocation>
    <subcellularLocation>
        <location evidence="1">Secreted</location>
    </subcellularLocation>
    <subcellularLocation>
        <location evidence="1">Endosome</location>
    </subcellularLocation>
    <subcellularLocation>
        <location evidence="1">Lysosome</location>
    </subcellularLocation>
    <subcellularLocation>
        <location evidence="1">Cell surface</location>
    </subcellularLocation>
    <subcellularLocation>
        <location evidence="1">Endoplasmic reticulum</location>
    </subcellularLocation>
    <subcellularLocation>
        <location evidence="1">Golgi apparatus</location>
    </subcellularLocation>
    <text evidence="1">Autocatalytic cleavage is required to transport it from the endoplasmic reticulum to the Golgi apparatus and for the secretion of the mature protein. Localizes to the endoplasmic reticulum in the absence of LDLR and colocalizes to the cell surface and to the endosomes/lysosomes in the presence of LDLR. The sorting to the cell surface and endosomes is required in order to fully promote LDLR degradation (By similarity).</text>
</comment>
<comment type="domain">
    <text evidence="1">The C-terminal domain (CRD) is essential for the LDLR-binding and degrading activities.</text>
</comment>
<comment type="domain">
    <text evidence="1">The catalytic domain is responsible for mediating its self-association.</text>
</comment>
<comment type="PTM">
    <text evidence="1">Cleavage by furin and PCSK5 generates a truncated inactive protein that is unable to induce LDLR degradation.</text>
</comment>
<comment type="PTM">
    <text evidence="1">Undergoes autocatalytic cleavage in the endoplasmic reticulum to release the propeptide from the N-terminus and the cleavage of the propeptide is strictly required for its maturation and activation. The cleaved propeptide however remains associated with the catalytic domain through non-covalent interactions, preventing potential substrates from accessing its active site. As a result, it is secreted from cells as a propeptide-containing, enzymatically inactive protein (By similarity).</text>
</comment>
<comment type="PTM">
    <text evidence="1">Phosphorylation protects the propeptide against proteolysis.</text>
</comment>
<comment type="similarity">
    <text evidence="5">Belongs to the peptidase S8 family.</text>
</comment>
<accession>A8T644</accession>
<feature type="signal peptide" evidence="1">
    <location>
        <begin position="1"/>
        <end position="30"/>
    </location>
</feature>
<feature type="propeptide" id="PRO_0000318290" evidence="1">
    <location>
        <begin position="31"/>
        <end position="152"/>
    </location>
</feature>
<feature type="chain" id="PRO_0000318291" description="Proprotein convertase subtilisin/kexin type 9">
    <location>
        <begin position="153"/>
        <end position="692"/>
    </location>
</feature>
<feature type="domain" description="Inhibitor I9" evidence="3">
    <location>
        <begin position="77"/>
        <end position="149"/>
    </location>
</feature>
<feature type="domain" description="Peptidase S8" evidence="4">
    <location>
        <begin position="155"/>
        <end position="461"/>
    </location>
</feature>
<feature type="region of interest" description="C-terminal domain" evidence="1">
    <location>
        <begin position="450"/>
        <end position="692"/>
    </location>
</feature>
<feature type="active site" description="Charge relay system" evidence="4">
    <location>
        <position position="186"/>
    </location>
</feature>
<feature type="active site" description="Charge relay system" evidence="4">
    <location>
        <position position="226"/>
    </location>
</feature>
<feature type="active site" description="Charge relay system" evidence="4">
    <location>
        <position position="386"/>
    </location>
</feature>
<feature type="site" description="Cleavage; by autolysis" evidence="1">
    <location>
        <begin position="152"/>
        <end position="153"/>
    </location>
</feature>
<feature type="site" description="Cleavage; by furin and PCSK5" evidence="1">
    <location>
        <begin position="218"/>
        <end position="219"/>
    </location>
</feature>
<feature type="modified residue" description="Sulfotyrosine" evidence="1">
    <location>
        <position position="38"/>
    </location>
</feature>
<feature type="modified residue" description="Phosphoserine" evidence="2">
    <location>
        <position position="47"/>
    </location>
</feature>
<feature type="modified residue" description="Phosphoserine" evidence="2">
    <location>
        <position position="688"/>
    </location>
</feature>
<feature type="glycosylation site" description="N-linked (GlcNAc...) asparagine" evidence="3">
    <location>
        <position position="533"/>
    </location>
</feature>
<feature type="disulfide bond" evidence="3">
    <location>
        <begin position="223"/>
        <end position="255"/>
    </location>
</feature>
<feature type="disulfide bond" evidence="3">
    <location>
        <begin position="323"/>
        <end position="358"/>
    </location>
</feature>
<feature type="disulfide bond" evidence="3">
    <location>
        <begin position="457"/>
        <end position="527"/>
    </location>
</feature>
<feature type="disulfide bond" evidence="3">
    <location>
        <begin position="477"/>
        <end position="526"/>
    </location>
</feature>
<feature type="disulfide bond" evidence="3">
    <location>
        <begin position="486"/>
        <end position="509"/>
    </location>
</feature>
<feature type="disulfide bond" evidence="3">
    <location>
        <begin position="534"/>
        <end position="601"/>
    </location>
</feature>
<feature type="disulfide bond" evidence="3">
    <location>
        <begin position="552"/>
        <end position="600"/>
    </location>
</feature>
<feature type="disulfide bond" evidence="3">
    <location>
        <begin position="562"/>
        <end position="588"/>
    </location>
</feature>
<feature type="disulfide bond" evidence="3">
    <location>
        <begin position="608"/>
        <end position="679"/>
    </location>
</feature>
<feature type="disulfide bond" evidence="3">
    <location>
        <begin position="626"/>
        <end position="678"/>
    </location>
</feature>
<feature type="disulfide bond" evidence="3">
    <location>
        <begin position="635"/>
        <end position="654"/>
    </location>
</feature>